<dbReference type="EMBL" id="AF008220">
    <property type="protein sequence ID" value="AAC00268.1"/>
    <property type="molecule type" value="Genomic_DNA"/>
</dbReference>
<dbReference type="EMBL" id="AL009126">
    <property type="protein sequence ID" value="CAB14995.1"/>
    <property type="molecule type" value="Genomic_DNA"/>
</dbReference>
<dbReference type="EMBL" id="U51868">
    <property type="protein sequence ID" value="AAB17464.1"/>
    <property type="status" value="ALT_INIT"/>
    <property type="molecule type" value="Genomic_DNA"/>
</dbReference>
<dbReference type="PIR" id="G69989">
    <property type="entry name" value="G69989"/>
</dbReference>
<dbReference type="RefSeq" id="NP_390895.1">
    <property type="nucleotide sequence ID" value="NC_000964.3"/>
</dbReference>
<dbReference type="RefSeq" id="WP_010886597.1">
    <property type="nucleotide sequence ID" value="NZ_OZ025638.1"/>
</dbReference>
<dbReference type="SMR" id="P53561"/>
<dbReference type="FunCoup" id="P53561">
    <property type="interactions" value="8"/>
</dbReference>
<dbReference type="STRING" id="224308.BSU30170"/>
<dbReference type="PaxDb" id="224308-BSU30170"/>
<dbReference type="EnsemblBacteria" id="CAB14995">
    <property type="protein sequence ID" value="CAB14995"/>
    <property type="gene ID" value="BSU_30170"/>
</dbReference>
<dbReference type="GeneID" id="938095"/>
<dbReference type="KEGG" id="bsu:BSU30170"/>
<dbReference type="PATRIC" id="fig|224308.43.peg.3156"/>
<dbReference type="eggNOG" id="COG0395">
    <property type="taxonomic scope" value="Bacteria"/>
</dbReference>
<dbReference type="InParanoid" id="P53561"/>
<dbReference type="OrthoDB" id="9810086at2"/>
<dbReference type="PhylomeDB" id="P53561"/>
<dbReference type="BioCyc" id="BSUB:BSU30170-MONOMER"/>
<dbReference type="Proteomes" id="UP000001570">
    <property type="component" value="Chromosome"/>
</dbReference>
<dbReference type="GO" id="GO:0005886">
    <property type="term" value="C:plasma membrane"/>
    <property type="evidence" value="ECO:0007669"/>
    <property type="project" value="UniProtKB-SubCell"/>
</dbReference>
<dbReference type="GO" id="GO:0055085">
    <property type="term" value="P:transmembrane transport"/>
    <property type="evidence" value="ECO:0007669"/>
    <property type="project" value="InterPro"/>
</dbReference>
<dbReference type="CDD" id="cd06261">
    <property type="entry name" value="TM_PBP2"/>
    <property type="match status" value="1"/>
</dbReference>
<dbReference type="Gene3D" id="1.10.3720.10">
    <property type="entry name" value="MetI-like"/>
    <property type="match status" value="1"/>
</dbReference>
<dbReference type="InterPro" id="IPR000515">
    <property type="entry name" value="MetI-like"/>
</dbReference>
<dbReference type="InterPro" id="IPR035906">
    <property type="entry name" value="MetI-like_sf"/>
</dbReference>
<dbReference type="PANTHER" id="PTHR43744">
    <property type="entry name" value="ABC TRANSPORTER PERMEASE PROTEIN MG189-RELATED-RELATED"/>
    <property type="match status" value="1"/>
</dbReference>
<dbReference type="PANTHER" id="PTHR43744:SF9">
    <property type="entry name" value="POLYGALACTURONAN_RHAMNOGALACTURONAN TRANSPORT SYSTEM PERMEASE PROTEIN YTCP"/>
    <property type="match status" value="1"/>
</dbReference>
<dbReference type="Pfam" id="PF00528">
    <property type="entry name" value="BPD_transp_1"/>
    <property type="match status" value="1"/>
</dbReference>
<dbReference type="SUPFAM" id="SSF161098">
    <property type="entry name" value="MetI-like"/>
    <property type="match status" value="1"/>
</dbReference>
<dbReference type="PROSITE" id="PS50928">
    <property type="entry name" value="ABC_TM1"/>
    <property type="match status" value="1"/>
</dbReference>
<organism>
    <name type="scientific">Bacillus subtilis (strain 168)</name>
    <dbReference type="NCBI Taxonomy" id="224308"/>
    <lineage>
        <taxon>Bacteria</taxon>
        <taxon>Bacillati</taxon>
        <taxon>Bacillota</taxon>
        <taxon>Bacilli</taxon>
        <taxon>Bacillales</taxon>
        <taxon>Bacillaceae</taxon>
        <taxon>Bacillus</taxon>
    </lineage>
</organism>
<reference key="1">
    <citation type="journal article" date="1997" name="Microbiology">
        <title>Sequencing and functional annotation of the Bacillus subtilis genes in the 200 kb rrnB-dnaB region.</title>
        <authorList>
            <person name="Lapidus A."/>
            <person name="Galleron N."/>
            <person name="Sorokin A."/>
            <person name="Ehrlich S.D."/>
        </authorList>
    </citation>
    <scope>NUCLEOTIDE SEQUENCE [GENOMIC DNA]</scope>
    <source>
        <strain>168</strain>
    </source>
</reference>
<reference key="2">
    <citation type="journal article" date="1997" name="Nature">
        <title>The complete genome sequence of the Gram-positive bacterium Bacillus subtilis.</title>
        <authorList>
            <person name="Kunst F."/>
            <person name="Ogasawara N."/>
            <person name="Moszer I."/>
            <person name="Albertini A.M."/>
            <person name="Alloni G."/>
            <person name="Azevedo V."/>
            <person name="Bertero M.G."/>
            <person name="Bessieres P."/>
            <person name="Bolotin A."/>
            <person name="Borchert S."/>
            <person name="Borriss R."/>
            <person name="Boursier L."/>
            <person name="Brans A."/>
            <person name="Braun M."/>
            <person name="Brignell S.C."/>
            <person name="Bron S."/>
            <person name="Brouillet S."/>
            <person name="Bruschi C.V."/>
            <person name="Caldwell B."/>
            <person name="Capuano V."/>
            <person name="Carter N.M."/>
            <person name="Choi S.-K."/>
            <person name="Codani J.-J."/>
            <person name="Connerton I.F."/>
            <person name="Cummings N.J."/>
            <person name="Daniel R.A."/>
            <person name="Denizot F."/>
            <person name="Devine K.M."/>
            <person name="Duesterhoeft A."/>
            <person name="Ehrlich S.D."/>
            <person name="Emmerson P.T."/>
            <person name="Entian K.-D."/>
            <person name="Errington J."/>
            <person name="Fabret C."/>
            <person name="Ferrari E."/>
            <person name="Foulger D."/>
            <person name="Fritz C."/>
            <person name="Fujita M."/>
            <person name="Fujita Y."/>
            <person name="Fuma S."/>
            <person name="Galizzi A."/>
            <person name="Galleron N."/>
            <person name="Ghim S.-Y."/>
            <person name="Glaser P."/>
            <person name="Goffeau A."/>
            <person name="Golightly E.J."/>
            <person name="Grandi G."/>
            <person name="Guiseppi G."/>
            <person name="Guy B.J."/>
            <person name="Haga K."/>
            <person name="Haiech J."/>
            <person name="Harwood C.R."/>
            <person name="Henaut A."/>
            <person name="Hilbert H."/>
            <person name="Holsappel S."/>
            <person name="Hosono S."/>
            <person name="Hullo M.-F."/>
            <person name="Itaya M."/>
            <person name="Jones L.-M."/>
            <person name="Joris B."/>
            <person name="Karamata D."/>
            <person name="Kasahara Y."/>
            <person name="Klaerr-Blanchard M."/>
            <person name="Klein C."/>
            <person name="Kobayashi Y."/>
            <person name="Koetter P."/>
            <person name="Koningstein G."/>
            <person name="Krogh S."/>
            <person name="Kumano M."/>
            <person name="Kurita K."/>
            <person name="Lapidus A."/>
            <person name="Lardinois S."/>
            <person name="Lauber J."/>
            <person name="Lazarevic V."/>
            <person name="Lee S.-M."/>
            <person name="Levine A."/>
            <person name="Liu H."/>
            <person name="Masuda S."/>
            <person name="Mauel C."/>
            <person name="Medigue C."/>
            <person name="Medina N."/>
            <person name="Mellado R.P."/>
            <person name="Mizuno M."/>
            <person name="Moestl D."/>
            <person name="Nakai S."/>
            <person name="Noback M."/>
            <person name="Noone D."/>
            <person name="O'Reilly M."/>
            <person name="Ogawa K."/>
            <person name="Ogiwara A."/>
            <person name="Oudega B."/>
            <person name="Park S.-H."/>
            <person name="Parro V."/>
            <person name="Pohl T.M."/>
            <person name="Portetelle D."/>
            <person name="Porwollik S."/>
            <person name="Prescott A.M."/>
            <person name="Presecan E."/>
            <person name="Pujic P."/>
            <person name="Purnelle B."/>
            <person name="Rapoport G."/>
            <person name="Rey M."/>
            <person name="Reynolds S."/>
            <person name="Rieger M."/>
            <person name="Rivolta C."/>
            <person name="Rocha E."/>
            <person name="Roche B."/>
            <person name="Rose M."/>
            <person name="Sadaie Y."/>
            <person name="Sato T."/>
            <person name="Scanlan E."/>
            <person name="Schleich S."/>
            <person name="Schroeter R."/>
            <person name="Scoffone F."/>
            <person name="Sekiguchi J."/>
            <person name="Sekowska A."/>
            <person name="Seror S.J."/>
            <person name="Serror P."/>
            <person name="Shin B.-S."/>
            <person name="Soldo B."/>
            <person name="Sorokin A."/>
            <person name="Tacconi E."/>
            <person name="Takagi T."/>
            <person name="Takahashi H."/>
            <person name="Takemaru K."/>
            <person name="Takeuchi M."/>
            <person name="Tamakoshi A."/>
            <person name="Tanaka T."/>
            <person name="Terpstra P."/>
            <person name="Tognoni A."/>
            <person name="Tosato V."/>
            <person name="Uchiyama S."/>
            <person name="Vandenbol M."/>
            <person name="Vannier F."/>
            <person name="Vassarotti A."/>
            <person name="Viari A."/>
            <person name="Wambutt R."/>
            <person name="Wedler E."/>
            <person name="Wedler H."/>
            <person name="Weitzenegger T."/>
            <person name="Winters P."/>
            <person name="Wipat A."/>
            <person name="Yamamoto H."/>
            <person name="Yamane K."/>
            <person name="Yasumoto K."/>
            <person name="Yata K."/>
            <person name="Yoshida K."/>
            <person name="Yoshikawa H.-F."/>
            <person name="Zumstein E."/>
            <person name="Yoshikawa H."/>
            <person name="Danchin A."/>
        </authorList>
    </citation>
    <scope>NUCLEOTIDE SEQUENCE [LARGE SCALE GENOMIC DNA]</scope>
    <source>
        <strain>168</strain>
    </source>
</reference>
<reference key="3">
    <citation type="journal article" date="1996" name="J. Bacteriol.">
        <title>Cloning, sequencing, and characterization of the Bacillus subtilis biotin biosynthetic operon.</title>
        <authorList>
            <person name="Bower S."/>
            <person name="Perkins J.B."/>
            <person name="Yocum R.R."/>
            <person name="Howitt C.L."/>
            <person name="Rahaim P."/>
            <person name="Pero J."/>
        </authorList>
    </citation>
    <scope>NUCLEOTIDE SEQUENCE [GENOMIC DNA] OF 1-253</scope>
</reference>
<reference key="4">
    <citation type="journal article" date="2017" name="PLoS ONE">
        <title>The MsmX ATPase plays a crucial role in pectin mobilization by Bacillus subtilis.</title>
        <authorList>
            <person name="Ferreira M.J."/>
            <person name="Mendes A.L."/>
            <person name="de Sa-Nogueira I."/>
        </authorList>
    </citation>
    <scope>FUNCTION</scope>
    <scope>SUBUNIT</scope>
</reference>
<evidence type="ECO:0000255" key="1">
    <source>
        <dbReference type="PROSITE-ProRule" id="PRU00441"/>
    </source>
</evidence>
<evidence type="ECO:0000269" key="2">
    <source>
    </source>
</evidence>
<evidence type="ECO:0000305" key="3"/>
<keyword id="KW-1003">Cell membrane</keyword>
<keyword id="KW-0472">Membrane</keyword>
<keyword id="KW-1185">Reference proteome</keyword>
<keyword id="KW-0762">Sugar transport</keyword>
<keyword id="KW-0812">Transmembrane</keyword>
<keyword id="KW-1133">Transmembrane helix</keyword>
<keyword id="KW-0813">Transport</keyword>
<gene>
    <name type="primary">ytcP</name>
    <name type="ordered locus">BSU30170</name>
</gene>
<protein>
    <recommendedName>
        <fullName evidence="3">Polygalacturonan/rhamnogalacturonan transport system permease protein YtcP</fullName>
    </recommendedName>
</protein>
<accession>P53561</accession>
<accession>O34963</accession>
<feature type="chain" id="PRO_0000060268" description="Polygalacturonan/rhamnogalacturonan transport system permease protein YtcP">
    <location>
        <begin position="1"/>
        <end position="286"/>
    </location>
</feature>
<feature type="transmembrane region" description="Helical" evidence="1">
    <location>
        <begin position="9"/>
        <end position="29"/>
    </location>
</feature>
<feature type="transmembrane region" description="Helical" evidence="1">
    <location>
        <begin position="69"/>
        <end position="89"/>
    </location>
</feature>
<feature type="transmembrane region" description="Helical" evidence="1">
    <location>
        <begin position="106"/>
        <end position="126"/>
    </location>
</feature>
<feature type="transmembrane region" description="Helical" evidence="1">
    <location>
        <begin position="131"/>
        <end position="151"/>
    </location>
</feature>
<feature type="transmembrane region" description="Helical" evidence="1">
    <location>
        <begin position="176"/>
        <end position="196"/>
    </location>
</feature>
<feature type="transmembrane region" description="Helical" evidence="1">
    <location>
        <begin position="251"/>
        <end position="271"/>
    </location>
</feature>
<feature type="domain" description="ABC transmembrane type-1" evidence="1">
    <location>
        <begin position="69"/>
        <end position="271"/>
    </location>
</feature>
<sequence length="286" mass="31693">MKNRLFDMLIYGFLLMFALICVLPFIHVIAASFATVEEVVSKKFILIPTTFSLDAYRYIFSTDIIYKSLLVSVFVTVIGTAVSMFLSSLMAYGLSRRDLIGRQPLMFLVVFTMLFSGGMIPTFLVVKSLGLLDSYWALILPTAINAFNLIILKNFFQNIPSSLEESAKIDGCNDLGIFFKIVLPLSLPAIATISLFYAVTYWNTYMTAILYLNDSAKWPIQVLLRQIVIVSSGMQGDMSEMGSGSPPPEQTIKMAVIVVATIPVLLVYPFIQKHFAKGALLGSVKG</sequence>
<name>YTCP_BACSU</name>
<proteinExistence type="evidence at protein level"/>
<comment type="function">
    <text evidence="2 3">Involved in pectin degradation (PubMed:29240795). Part of the ABC transporter complex YtcQP-YteP involved in the uptake of polygalacturonan and rhamnogalacturonan type I (PubMed:29240795). Responsible for the translocation of the substrate across the membrane (Probable).</text>
</comment>
<comment type="subunit">
    <text evidence="2">The complex is probably composed of two ATP-binding proteins (MsmX), two transmembrane proteins (YtcP and YteP) and a solute-binding protein (YtcQ).</text>
</comment>
<comment type="subcellular location">
    <subcellularLocation>
        <location evidence="3">Cell membrane</location>
        <topology evidence="1">Multi-pass membrane protein</topology>
    </subcellularLocation>
</comment>
<comment type="similarity">
    <text evidence="3">Belongs to the binding-protein-dependent transport system permease family. CysTW subfamily.</text>
</comment>
<comment type="sequence caution" evidence="3">
    <conflict type="erroneous initiation">
        <sequence resource="EMBL-CDS" id="AAB17464"/>
    </conflict>
</comment>